<dbReference type="EC" id="2.5.1.141" evidence="1"/>
<dbReference type="EMBL" id="AL591688">
    <property type="protein sequence ID" value="CAC45478.1"/>
    <property type="status" value="ALT_INIT"/>
    <property type="molecule type" value="Genomic_DNA"/>
</dbReference>
<dbReference type="RefSeq" id="NP_385012.1">
    <property type="nucleotide sequence ID" value="NC_003047.1"/>
</dbReference>
<dbReference type="RefSeq" id="WP_041170167.1">
    <property type="nucleotide sequence ID" value="NC_003047.1"/>
</dbReference>
<dbReference type="SMR" id="Q92RG8"/>
<dbReference type="EnsemblBacteria" id="CAC45478">
    <property type="protein sequence ID" value="CAC45478"/>
    <property type="gene ID" value="SMc00450"/>
</dbReference>
<dbReference type="KEGG" id="sme:SMc00450"/>
<dbReference type="PATRIC" id="fig|266834.11.peg.2303"/>
<dbReference type="eggNOG" id="COG0109">
    <property type="taxonomic scope" value="Bacteria"/>
</dbReference>
<dbReference type="HOGENOM" id="CLU_029631_0_2_5"/>
<dbReference type="OrthoDB" id="9814417at2"/>
<dbReference type="UniPathway" id="UPA00834">
    <property type="reaction ID" value="UER00712"/>
</dbReference>
<dbReference type="Proteomes" id="UP000001976">
    <property type="component" value="Chromosome"/>
</dbReference>
<dbReference type="GO" id="GO:0005886">
    <property type="term" value="C:plasma membrane"/>
    <property type="evidence" value="ECO:0007669"/>
    <property type="project" value="UniProtKB-SubCell"/>
</dbReference>
<dbReference type="GO" id="GO:0008495">
    <property type="term" value="F:protoheme IX farnesyltransferase activity"/>
    <property type="evidence" value="ECO:0007669"/>
    <property type="project" value="UniProtKB-UniRule"/>
</dbReference>
<dbReference type="GO" id="GO:0048034">
    <property type="term" value="P:heme O biosynthetic process"/>
    <property type="evidence" value="ECO:0007669"/>
    <property type="project" value="UniProtKB-UniRule"/>
</dbReference>
<dbReference type="CDD" id="cd13957">
    <property type="entry name" value="PT_UbiA_Cox10"/>
    <property type="match status" value="1"/>
</dbReference>
<dbReference type="Gene3D" id="1.10.357.140">
    <property type="entry name" value="UbiA prenyltransferase"/>
    <property type="match status" value="1"/>
</dbReference>
<dbReference type="HAMAP" id="MF_00154">
    <property type="entry name" value="CyoE_CtaB"/>
    <property type="match status" value="1"/>
</dbReference>
<dbReference type="InterPro" id="IPR006369">
    <property type="entry name" value="Protohaem_IX_farnesylTrfase"/>
</dbReference>
<dbReference type="InterPro" id="IPR000537">
    <property type="entry name" value="UbiA_prenyltransferase"/>
</dbReference>
<dbReference type="InterPro" id="IPR030470">
    <property type="entry name" value="UbiA_prenylTrfase_CS"/>
</dbReference>
<dbReference type="InterPro" id="IPR044878">
    <property type="entry name" value="UbiA_sf"/>
</dbReference>
<dbReference type="NCBIfam" id="TIGR01473">
    <property type="entry name" value="cyoE_ctaB"/>
    <property type="match status" value="1"/>
</dbReference>
<dbReference type="NCBIfam" id="NF003349">
    <property type="entry name" value="PRK04375.1-2"/>
    <property type="match status" value="1"/>
</dbReference>
<dbReference type="PANTHER" id="PTHR43448:SF7">
    <property type="entry name" value="4-HYDROXYBENZOATE SOLANESYLTRANSFERASE"/>
    <property type="match status" value="1"/>
</dbReference>
<dbReference type="PANTHER" id="PTHR43448">
    <property type="entry name" value="PROTOHEME IX FARNESYLTRANSFERASE, MITOCHONDRIAL"/>
    <property type="match status" value="1"/>
</dbReference>
<dbReference type="Pfam" id="PF01040">
    <property type="entry name" value="UbiA"/>
    <property type="match status" value="1"/>
</dbReference>
<dbReference type="PROSITE" id="PS00943">
    <property type="entry name" value="UBIA"/>
    <property type="match status" value="1"/>
</dbReference>
<sequence>MTVIGNHEVVGMEGAPRLSEASARDYFELLKPRVMSLVVFTAFAGLVLAPGHINPFIGFTAILCIAIGAGASGALNMWYDADIDAVMSRTAKRPIPAGKILPQEALAFGLTLSAFSVIILGLAVHWLAAGLLAFTIFFYVAIYTMWLKRSTPQNIVIGGAAGAFPPMIGWACVTGGVSVESIVLFLIIFLWTPAHFWALALFKMGDYGAVGVPMMPNVCGEATTKRQIVIYAVLTAVSGVCPTLLGFASLGYGAFATVMGLGFVWYSLGVLRMPEGDKRMVPAKKLFAFSIAYLFAIFSALLVDYAIARIWLGGIV</sequence>
<comment type="function">
    <text evidence="1">Converts heme B (protoheme IX) to heme O by substitution of the vinyl group on carbon 2 of heme B porphyrin ring with a hydroxyethyl farnesyl side group.</text>
</comment>
<comment type="catalytic activity">
    <reaction evidence="1">
        <text>heme b + (2E,6E)-farnesyl diphosphate + H2O = Fe(II)-heme o + diphosphate</text>
        <dbReference type="Rhea" id="RHEA:28070"/>
        <dbReference type="ChEBI" id="CHEBI:15377"/>
        <dbReference type="ChEBI" id="CHEBI:33019"/>
        <dbReference type="ChEBI" id="CHEBI:60344"/>
        <dbReference type="ChEBI" id="CHEBI:60530"/>
        <dbReference type="ChEBI" id="CHEBI:175763"/>
        <dbReference type="EC" id="2.5.1.141"/>
    </reaction>
</comment>
<comment type="pathway">
    <text evidence="1">Porphyrin-containing compound metabolism; heme O biosynthesis; heme O from protoheme: step 1/1.</text>
</comment>
<comment type="subcellular location">
    <subcellularLocation>
        <location evidence="1">Cell inner membrane</location>
        <topology evidence="1">Multi-pass membrane protein</topology>
    </subcellularLocation>
</comment>
<comment type="miscellaneous">
    <text evidence="1">Carbon 2 of the heme B porphyrin ring is defined according to the Fischer nomenclature.</text>
</comment>
<comment type="similarity">
    <text evidence="1">Belongs to the UbiA prenyltransferase family. Protoheme IX farnesyltransferase subfamily.</text>
</comment>
<comment type="sequence caution" evidence="2">
    <conflict type="erroneous initiation">
        <sequence resource="EMBL-CDS" id="CAC45478"/>
    </conflict>
</comment>
<evidence type="ECO:0000255" key="1">
    <source>
        <dbReference type="HAMAP-Rule" id="MF_00154"/>
    </source>
</evidence>
<evidence type="ECO:0000305" key="2"/>
<name>COXX_RHIME</name>
<keyword id="KW-0997">Cell inner membrane</keyword>
<keyword id="KW-1003">Cell membrane</keyword>
<keyword id="KW-0350">Heme biosynthesis</keyword>
<keyword id="KW-0472">Membrane</keyword>
<keyword id="KW-1185">Reference proteome</keyword>
<keyword id="KW-0808">Transferase</keyword>
<keyword id="KW-0812">Transmembrane</keyword>
<keyword id="KW-1133">Transmembrane helix</keyword>
<organism>
    <name type="scientific">Rhizobium meliloti (strain 1021)</name>
    <name type="common">Ensifer meliloti</name>
    <name type="synonym">Sinorhizobium meliloti</name>
    <dbReference type="NCBI Taxonomy" id="266834"/>
    <lineage>
        <taxon>Bacteria</taxon>
        <taxon>Pseudomonadati</taxon>
        <taxon>Pseudomonadota</taxon>
        <taxon>Alphaproteobacteria</taxon>
        <taxon>Hyphomicrobiales</taxon>
        <taxon>Rhizobiaceae</taxon>
        <taxon>Sinorhizobium/Ensifer group</taxon>
        <taxon>Sinorhizobium</taxon>
    </lineage>
</organism>
<feature type="chain" id="PRO_0000327133" description="Protoheme IX farnesyltransferase">
    <location>
        <begin position="1"/>
        <end position="316"/>
    </location>
</feature>
<feature type="transmembrane region" description="Helical" evidence="1">
    <location>
        <begin position="34"/>
        <end position="54"/>
    </location>
</feature>
<feature type="transmembrane region" description="Helical" evidence="1">
    <location>
        <begin position="55"/>
        <end position="75"/>
    </location>
</feature>
<feature type="transmembrane region" description="Helical" evidence="1">
    <location>
        <begin position="95"/>
        <end position="115"/>
    </location>
</feature>
<feature type="transmembrane region" description="Helical" evidence="1">
    <location>
        <begin position="118"/>
        <end position="138"/>
    </location>
</feature>
<feature type="transmembrane region" description="Helical" evidence="1">
    <location>
        <begin position="155"/>
        <end position="175"/>
    </location>
</feature>
<feature type="transmembrane region" description="Helical" evidence="1">
    <location>
        <begin position="182"/>
        <end position="202"/>
    </location>
</feature>
<feature type="transmembrane region" description="Helical" evidence="1">
    <location>
        <begin position="228"/>
        <end position="250"/>
    </location>
</feature>
<feature type="transmembrane region" description="Helical" evidence="1">
    <location>
        <begin position="254"/>
        <end position="273"/>
    </location>
</feature>
<feature type="transmembrane region" description="Helical" evidence="1">
    <location>
        <begin position="287"/>
        <end position="307"/>
    </location>
</feature>
<protein>
    <recommendedName>
        <fullName evidence="1">Protoheme IX farnesyltransferase</fullName>
        <ecNumber evidence="1">2.5.1.141</ecNumber>
    </recommendedName>
    <alternativeName>
        <fullName evidence="1">Heme B farnesyltransferase</fullName>
    </alternativeName>
    <alternativeName>
        <fullName evidence="1">Heme O synthase</fullName>
    </alternativeName>
</protein>
<gene>
    <name evidence="1" type="primary">ctaB</name>
    <name type="ordered locus">R00906</name>
    <name type="ORF">SMc00450</name>
</gene>
<reference key="1">
    <citation type="journal article" date="2001" name="Proc. Natl. Acad. Sci. U.S.A.">
        <title>Analysis of the chromosome sequence of the legume symbiont Sinorhizobium meliloti strain 1021.</title>
        <authorList>
            <person name="Capela D."/>
            <person name="Barloy-Hubler F."/>
            <person name="Gouzy J."/>
            <person name="Bothe G."/>
            <person name="Ampe F."/>
            <person name="Batut J."/>
            <person name="Boistard P."/>
            <person name="Becker A."/>
            <person name="Boutry M."/>
            <person name="Cadieu E."/>
            <person name="Dreano S."/>
            <person name="Gloux S."/>
            <person name="Godrie T."/>
            <person name="Goffeau A."/>
            <person name="Kahn D."/>
            <person name="Kiss E."/>
            <person name="Lelaure V."/>
            <person name="Masuy D."/>
            <person name="Pohl T."/>
            <person name="Portetelle D."/>
            <person name="Puehler A."/>
            <person name="Purnelle B."/>
            <person name="Ramsperger U."/>
            <person name="Renard C."/>
            <person name="Thebault P."/>
            <person name="Vandenbol M."/>
            <person name="Weidner S."/>
            <person name="Galibert F."/>
        </authorList>
    </citation>
    <scope>NUCLEOTIDE SEQUENCE [LARGE SCALE GENOMIC DNA]</scope>
    <source>
        <strain>1021</strain>
    </source>
</reference>
<reference key="2">
    <citation type="journal article" date="2001" name="Science">
        <title>The composite genome of the legume symbiont Sinorhizobium meliloti.</title>
        <authorList>
            <person name="Galibert F."/>
            <person name="Finan T.M."/>
            <person name="Long S.R."/>
            <person name="Puehler A."/>
            <person name="Abola P."/>
            <person name="Ampe F."/>
            <person name="Barloy-Hubler F."/>
            <person name="Barnett M.J."/>
            <person name="Becker A."/>
            <person name="Boistard P."/>
            <person name="Bothe G."/>
            <person name="Boutry M."/>
            <person name="Bowser L."/>
            <person name="Buhrmester J."/>
            <person name="Cadieu E."/>
            <person name="Capela D."/>
            <person name="Chain P."/>
            <person name="Cowie A."/>
            <person name="Davis R.W."/>
            <person name="Dreano S."/>
            <person name="Federspiel N.A."/>
            <person name="Fisher R.F."/>
            <person name="Gloux S."/>
            <person name="Godrie T."/>
            <person name="Goffeau A."/>
            <person name="Golding B."/>
            <person name="Gouzy J."/>
            <person name="Gurjal M."/>
            <person name="Hernandez-Lucas I."/>
            <person name="Hong A."/>
            <person name="Huizar L."/>
            <person name="Hyman R.W."/>
            <person name="Jones T."/>
            <person name="Kahn D."/>
            <person name="Kahn M.L."/>
            <person name="Kalman S."/>
            <person name="Keating D.H."/>
            <person name="Kiss E."/>
            <person name="Komp C."/>
            <person name="Lelaure V."/>
            <person name="Masuy D."/>
            <person name="Palm C."/>
            <person name="Peck M.C."/>
            <person name="Pohl T.M."/>
            <person name="Portetelle D."/>
            <person name="Purnelle B."/>
            <person name="Ramsperger U."/>
            <person name="Surzycki R."/>
            <person name="Thebault P."/>
            <person name="Vandenbol M."/>
            <person name="Vorhoelter F.J."/>
            <person name="Weidner S."/>
            <person name="Wells D.H."/>
            <person name="Wong K."/>
            <person name="Yeh K.-C."/>
            <person name="Batut J."/>
        </authorList>
    </citation>
    <scope>NUCLEOTIDE SEQUENCE [LARGE SCALE GENOMIC DNA]</scope>
    <source>
        <strain>1021</strain>
    </source>
</reference>
<proteinExistence type="inferred from homology"/>
<accession>Q92RG8</accession>